<keyword id="KW-0067">ATP-binding</keyword>
<keyword id="KW-0963">Cytoplasm</keyword>
<keyword id="KW-0227">DNA damage</keyword>
<keyword id="KW-0234">DNA repair</keyword>
<keyword id="KW-0237">DNA synthesis</keyword>
<keyword id="KW-0418">Kinase</keyword>
<keyword id="KW-0479">Metal-binding</keyword>
<keyword id="KW-0547">Nucleotide-binding</keyword>
<keyword id="KW-1185">Reference proteome</keyword>
<keyword id="KW-0808">Transferase</keyword>
<keyword id="KW-0862">Zinc</keyword>
<evidence type="ECO:0000250" key="1">
    <source>
        <dbReference type="UniProtKB" id="O57203"/>
    </source>
</evidence>
<evidence type="ECO:0000250" key="2">
    <source>
        <dbReference type="UniProtKB" id="P04183"/>
    </source>
</evidence>
<evidence type="ECO:0000269" key="3">
    <source>
    </source>
</evidence>
<evidence type="ECO:0000269" key="4">
    <source>
    </source>
</evidence>
<evidence type="ECO:0000269" key="5">
    <source>
    </source>
</evidence>
<evidence type="ECO:0000303" key="6">
    <source>
    </source>
</evidence>
<evidence type="ECO:0000305" key="7"/>
<evidence type="ECO:0000312" key="8">
    <source>
        <dbReference type="Araport" id="AT3G07800"/>
    </source>
</evidence>
<evidence type="ECO:0000312" key="9">
    <source>
        <dbReference type="EMBL" id="AAF13097.1"/>
    </source>
</evidence>
<evidence type="ECO:0000312" key="10">
    <source>
        <dbReference type="EMBL" id="AAF21190.1"/>
    </source>
</evidence>
<protein>
    <recommendedName>
        <fullName evidence="6">Thymidine kinase a</fullName>
        <shortName evidence="6">AtTK1a</shortName>
        <ecNumber evidence="3 4">2.7.1.21</ecNumber>
    </recommendedName>
</protein>
<accession>Q9S750</accession>
<accession>Q8LDP6</accession>
<organism>
    <name type="scientific">Arabidopsis thaliana</name>
    <name type="common">Mouse-ear cress</name>
    <dbReference type="NCBI Taxonomy" id="3702"/>
    <lineage>
        <taxon>Eukaryota</taxon>
        <taxon>Viridiplantae</taxon>
        <taxon>Streptophyta</taxon>
        <taxon>Embryophyta</taxon>
        <taxon>Tracheophyta</taxon>
        <taxon>Spermatophyta</taxon>
        <taxon>Magnoliopsida</taxon>
        <taxon>eudicotyledons</taxon>
        <taxon>Gunneridae</taxon>
        <taxon>Pentapetalae</taxon>
        <taxon>rosids</taxon>
        <taxon>malvids</taxon>
        <taxon>Brassicales</taxon>
        <taxon>Brassicaceae</taxon>
        <taxon>Camelineae</taxon>
        <taxon>Arabidopsis</taxon>
    </lineage>
</organism>
<feature type="chain" id="PRO_0000435651" description="Thymidine kinase a">
    <location>
        <begin position="1"/>
        <end position="238"/>
    </location>
</feature>
<feature type="active site" description="Proton acceptor" evidence="1">
    <location>
        <position position="116"/>
    </location>
</feature>
<feature type="binding site" evidence="1">
    <location>
        <begin position="38"/>
        <end position="45"/>
    </location>
    <ligand>
        <name>ATP</name>
        <dbReference type="ChEBI" id="CHEBI:30616"/>
    </ligand>
</feature>
<feature type="binding site" evidence="2">
    <location>
        <begin position="70"/>
        <end position="72"/>
    </location>
    <ligand>
        <name>ATP</name>
        <dbReference type="ChEBI" id="CHEBI:30616"/>
    </ligand>
</feature>
<feature type="binding site" evidence="2">
    <location>
        <begin position="115"/>
        <end position="118"/>
    </location>
    <ligand>
        <name>ATP</name>
        <dbReference type="ChEBI" id="CHEBI:30616"/>
    </ligand>
</feature>
<feature type="binding site" evidence="1">
    <location>
        <position position="147"/>
    </location>
    <ligand>
        <name>substrate</name>
    </ligand>
</feature>
<feature type="binding site" evidence="1">
    <location>
        <position position="172"/>
    </location>
    <ligand>
        <name>Zn(2+)</name>
        <dbReference type="ChEBI" id="CHEBI:29105"/>
    </ligand>
</feature>
<feature type="binding site" evidence="1">
    <location>
        <position position="175"/>
    </location>
    <ligand>
        <name>Zn(2+)</name>
        <dbReference type="ChEBI" id="CHEBI:29105"/>
    </ligand>
</feature>
<feature type="binding site" evidence="1">
    <location>
        <begin position="191"/>
        <end position="195"/>
    </location>
    <ligand>
        <name>substrate</name>
    </ligand>
</feature>
<feature type="binding site" evidence="2">
    <location>
        <position position="200"/>
    </location>
    <ligand>
        <name>substrate</name>
    </ligand>
</feature>
<feature type="binding site" evidence="1">
    <location>
        <position position="204"/>
    </location>
    <ligand>
        <name>Zn(2+)</name>
        <dbReference type="ChEBI" id="CHEBI:29105"/>
    </ligand>
</feature>
<feature type="sequence conflict" description="In Ref. 4; AAM63086." evidence="7" ref="4">
    <original>S</original>
    <variation>N</variation>
    <location>
        <position position="15"/>
    </location>
</feature>
<name>KITHA_ARATH</name>
<proteinExistence type="evidence at protein level"/>
<comment type="function">
    <text evidence="3 5">Part of the salvage pathway for purine and pyrimidine deoxyribonucleotide synthesis. Phosphorylates preferentially purines over pyrimidines (PubMed:22897443). Mediates tolerance to genotoxins, such as ultraviolet-C (UV-C) irradiation, MMC, a DNA crosslinker, and ZEO, a DNA intercalator, that induce double-strand breaks and thus contributes to several DNA repair pathways by providing deoxythymidine triphosphate that serve as precursors for DNA repair and to balance deoxyribonucleotides pools (PubMed:25537647).</text>
</comment>
<comment type="catalytic activity">
    <reaction evidence="3 4">
        <text>thymidine + ATP = dTMP + ADP + H(+)</text>
        <dbReference type="Rhea" id="RHEA:19129"/>
        <dbReference type="ChEBI" id="CHEBI:15378"/>
        <dbReference type="ChEBI" id="CHEBI:17748"/>
        <dbReference type="ChEBI" id="CHEBI:30616"/>
        <dbReference type="ChEBI" id="CHEBI:63528"/>
        <dbReference type="ChEBI" id="CHEBI:456216"/>
        <dbReference type="EC" id="2.7.1.21"/>
    </reaction>
</comment>
<comment type="biophysicochemical properties">
    <kinetics>
        <KM evidence="3">15 uM for deoxyuridine</KM>
        <KM evidence="3">0.48 uM for deoxythymidine</KM>
        <KM evidence="3">2.7 uM for AZT</KM>
        <KM evidence="4">0.6 uM for thymidine (in the absence of ATP)</KM>
        <KM evidence="4">0.7 uM for thymidine (in the presence of ATP)</KM>
        <Vmax evidence="4">0.5 umol/min/mg enzyme with thymidine as substrate (in the absence of ATP)</Vmax>
        <Vmax evidence="4">1.0 umol/min/mg enzyme with thymidine as substrate (in the presence of ATP)</Vmax>
        <text evidence="3">kcat is 1.5 sec(-1) with deoxyuridine (dU) as substrate. kcat is 0.48 sec(-1) with deoxythymidine (dT) as substrate. kcat is 0.13 sec(-1) with 3'-azido-3'-deoxythymidine (AZT) as substrate.</text>
    </kinetics>
</comment>
<comment type="pathway">
    <text evidence="3">Purine metabolism.</text>
</comment>
<comment type="pathway">
    <text evidence="3 4">Pyrimidine metabolism.</text>
</comment>
<comment type="subunit">
    <text evidence="4">Monomer and dimer. Dimerization is stimulated by ATP.</text>
</comment>
<comment type="interaction">
    <interactant intactId="EBI-4455798">
        <id>Q9S750</id>
    </interactant>
    <interactant intactId="EBI-4455798">
        <id>Q9S750</id>
        <label>TK1A</label>
    </interactant>
    <organismsDiffer>false</organismsDiffer>
    <experiments>2</experiments>
</comment>
<comment type="subcellular location">
    <subcellularLocation>
        <location evidence="2">Cytoplasm</location>
    </subcellularLocation>
</comment>
<comment type="tissue specificity">
    <text evidence="5">Expressed ubiquitously.</text>
</comment>
<comment type="developmental stage">
    <text evidence="5">Strongly expressed at the early stages of germination upon testa rupture and throughout seedling development. Accumulates in the cotyledons and foliar primordia. In seedlings, highly present in almost every organ except the root meristem and secondary root primordia. In young leaves, detected in the trichomes. In mature leaves, present in the vasculature as well as in the pedicel and base. In flowers organs, mostly expressed in stigma, petals, anthers and pollen. In developing siliques, restricted to pedicels and septum.</text>
</comment>
<comment type="induction">
    <text evidence="5">Induced by genotoxins such as ultraviolet-C radiation (UV-C), and ZEO and MMC treatments.</text>
</comment>
<comment type="disruption phenotype">
    <text evidence="3">No visible phenotype. The double mutant tk1a tk1b is seedling lethal.</text>
</comment>
<comment type="similarity">
    <text evidence="7">Belongs to the thymidine kinase family.</text>
</comment>
<gene>
    <name evidence="6" type="primary">TK1A</name>
    <name evidence="8" type="ordered locus">At3g07800</name>
    <name evidence="10" type="ORF">F17A17.14</name>
    <name evidence="9" type="ORF">MLP3.25</name>
</gene>
<reference key="1">
    <citation type="journal article" date="2000" name="Nature">
        <title>Sequence and analysis of chromosome 3 of the plant Arabidopsis thaliana.</title>
        <authorList>
            <person name="Salanoubat M."/>
            <person name="Lemcke K."/>
            <person name="Rieger M."/>
            <person name="Ansorge W."/>
            <person name="Unseld M."/>
            <person name="Fartmann B."/>
            <person name="Valle G."/>
            <person name="Bloecker H."/>
            <person name="Perez-Alonso M."/>
            <person name="Obermaier B."/>
            <person name="Delseny M."/>
            <person name="Boutry M."/>
            <person name="Grivell L.A."/>
            <person name="Mache R."/>
            <person name="Puigdomenech P."/>
            <person name="De Simone V."/>
            <person name="Choisne N."/>
            <person name="Artiguenave F."/>
            <person name="Robert C."/>
            <person name="Brottier P."/>
            <person name="Wincker P."/>
            <person name="Cattolico L."/>
            <person name="Weissenbach J."/>
            <person name="Saurin W."/>
            <person name="Quetier F."/>
            <person name="Schaefer M."/>
            <person name="Mueller-Auer S."/>
            <person name="Gabel C."/>
            <person name="Fuchs M."/>
            <person name="Benes V."/>
            <person name="Wurmbach E."/>
            <person name="Drzonek H."/>
            <person name="Erfle H."/>
            <person name="Jordan N."/>
            <person name="Bangert S."/>
            <person name="Wiedelmann R."/>
            <person name="Kranz H."/>
            <person name="Voss H."/>
            <person name="Holland R."/>
            <person name="Brandt P."/>
            <person name="Nyakatura G."/>
            <person name="Vezzi A."/>
            <person name="D'Angelo M."/>
            <person name="Pallavicini A."/>
            <person name="Toppo S."/>
            <person name="Simionati B."/>
            <person name="Conrad A."/>
            <person name="Hornischer K."/>
            <person name="Kauer G."/>
            <person name="Loehnert T.-H."/>
            <person name="Nordsiek G."/>
            <person name="Reichelt J."/>
            <person name="Scharfe M."/>
            <person name="Schoen O."/>
            <person name="Bargues M."/>
            <person name="Terol J."/>
            <person name="Climent J."/>
            <person name="Navarro P."/>
            <person name="Collado C."/>
            <person name="Perez-Perez A."/>
            <person name="Ottenwaelder B."/>
            <person name="Duchemin D."/>
            <person name="Cooke R."/>
            <person name="Laudie M."/>
            <person name="Berger-Llauro C."/>
            <person name="Purnelle B."/>
            <person name="Masuy D."/>
            <person name="de Haan M."/>
            <person name="Maarse A.C."/>
            <person name="Alcaraz J.-P."/>
            <person name="Cottet A."/>
            <person name="Casacuberta E."/>
            <person name="Monfort A."/>
            <person name="Argiriou A."/>
            <person name="Flores M."/>
            <person name="Liguori R."/>
            <person name="Vitale D."/>
            <person name="Mannhaupt G."/>
            <person name="Haase D."/>
            <person name="Schoof H."/>
            <person name="Rudd S."/>
            <person name="Zaccaria P."/>
            <person name="Mewes H.-W."/>
            <person name="Mayer K.F.X."/>
            <person name="Kaul S."/>
            <person name="Town C.D."/>
            <person name="Koo H.L."/>
            <person name="Tallon L.J."/>
            <person name="Jenkins J."/>
            <person name="Rooney T."/>
            <person name="Rizzo M."/>
            <person name="Walts A."/>
            <person name="Utterback T."/>
            <person name="Fujii C.Y."/>
            <person name="Shea T.P."/>
            <person name="Creasy T.H."/>
            <person name="Haas B."/>
            <person name="Maiti R."/>
            <person name="Wu D."/>
            <person name="Peterson J."/>
            <person name="Van Aken S."/>
            <person name="Pai G."/>
            <person name="Militscher J."/>
            <person name="Sellers P."/>
            <person name="Gill J.E."/>
            <person name="Feldblyum T.V."/>
            <person name="Preuss D."/>
            <person name="Lin X."/>
            <person name="Nierman W.C."/>
            <person name="Salzberg S.L."/>
            <person name="White O."/>
            <person name="Venter J.C."/>
            <person name="Fraser C.M."/>
            <person name="Kaneko T."/>
            <person name="Nakamura Y."/>
            <person name="Sato S."/>
            <person name="Kato T."/>
            <person name="Asamizu E."/>
            <person name="Sasamoto S."/>
            <person name="Kimura T."/>
            <person name="Idesawa K."/>
            <person name="Kawashima K."/>
            <person name="Kishida Y."/>
            <person name="Kiyokawa C."/>
            <person name="Kohara M."/>
            <person name="Matsumoto M."/>
            <person name="Matsuno A."/>
            <person name="Muraki A."/>
            <person name="Nakayama S."/>
            <person name="Nakazaki N."/>
            <person name="Shinpo S."/>
            <person name="Takeuchi C."/>
            <person name="Wada T."/>
            <person name="Watanabe A."/>
            <person name="Yamada M."/>
            <person name="Yasuda M."/>
            <person name="Tabata S."/>
        </authorList>
    </citation>
    <scope>NUCLEOTIDE SEQUENCE [LARGE SCALE GENOMIC DNA]</scope>
    <source>
        <strain>cv. Columbia</strain>
    </source>
</reference>
<reference key="2">
    <citation type="journal article" date="2017" name="Plant J.">
        <title>Araport11: a complete reannotation of the Arabidopsis thaliana reference genome.</title>
        <authorList>
            <person name="Cheng C.Y."/>
            <person name="Krishnakumar V."/>
            <person name="Chan A.P."/>
            <person name="Thibaud-Nissen F."/>
            <person name="Schobel S."/>
            <person name="Town C.D."/>
        </authorList>
    </citation>
    <scope>GENOME REANNOTATION</scope>
    <source>
        <strain>cv. Columbia</strain>
    </source>
</reference>
<reference key="3">
    <citation type="journal article" date="2003" name="Science">
        <title>Empirical analysis of transcriptional activity in the Arabidopsis genome.</title>
        <authorList>
            <person name="Yamada K."/>
            <person name="Lim J."/>
            <person name="Dale J.M."/>
            <person name="Chen H."/>
            <person name="Shinn P."/>
            <person name="Palm C.J."/>
            <person name="Southwick A.M."/>
            <person name="Wu H.C."/>
            <person name="Kim C.J."/>
            <person name="Nguyen M."/>
            <person name="Pham P.K."/>
            <person name="Cheuk R.F."/>
            <person name="Karlin-Newmann G."/>
            <person name="Liu S.X."/>
            <person name="Lam B."/>
            <person name="Sakano H."/>
            <person name="Wu T."/>
            <person name="Yu G."/>
            <person name="Miranda M."/>
            <person name="Quach H.L."/>
            <person name="Tripp M."/>
            <person name="Chang C.H."/>
            <person name="Lee J.M."/>
            <person name="Toriumi M.J."/>
            <person name="Chan M.M."/>
            <person name="Tang C.C."/>
            <person name="Onodera C.S."/>
            <person name="Deng J.M."/>
            <person name="Akiyama K."/>
            <person name="Ansari Y."/>
            <person name="Arakawa T."/>
            <person name="Banh J."/>
            <person name="Banno F."/>
            <person name="Bowser L."/>
            <person name="Brooks S.Y."/>
            <person name="Carninci P."/>
            <person name="Chao Q."/>
            <person name="Choy N."/>
            <person name="Enju A."/>
            <person name="Goldsmith A.D."/>
            <person name="Gurjal M."/>
            <person name="Hansen N.F."/>
            <person name="Hayashizaki Y."/>
            <person name="Johnson-Hopson C."/>
            <person name="Hsuan V.W."/>
            <person name="Iida K."/>
            <person name="Karnes M."/>
            <person name="Khan S."/>
            <person name="Koesema E."/>
            <person name="Ishida J."/>
            <person name="Jiang P.X."/>
            <person name="Jones T."/>
            <person name="Kawai J."/>
            <person name="Kamiya A."/>
            <person name="Meyers C."/>
            <person name="Nakajima M."/>
            <person name="Narusaka M."/>
            <person name="Seki M."/>
            <person name="Sakurai T."/>
            <person name="Satou M."/>
            <person name="Tamse R."/>
            <person name="Vaysberg M."/>
            <person name="Wallender E.K."/>
            <person name="Wong C."/>
            <person name="Yamamura Y."/>
            <person name="Yuan S."/>
            <person name="Shinozaki K."/>
            <person name="Davis R.W."/>
            <person name="Theologis A."/>
            <person name="Ecker J.R."/>
        </authorList>
    </citation>
    <scope>NUCLEOTIDE SEQUENCE [LARGE SCALE MRNA]</scope>
    <source>
        <strain>cv. Columbia</strain>
    </source>
</reference>
<reference key="4">
    <citation type="submission" date="2002-03" db="EMBL/GenBank/DDBJ databases">
        <title>Full-length cDNA from Arabidopsis thaliana.</title>
        <authorList>
            <person name="Brover V.V."/>
            <person name="Troukhan M.E."/>
            <person name="Alexandrov N.A."/>
            <person name="Lu Y.-P."/>
            <person name="Flavell R.B."/>
            <person name="Feldmann K.A."/>
        </authorList>
    </citation>
    <scope>NUCLEOTIDE SEQUENCE [LARGE SCALE MRNA]</scope>
</reference>
<reference key="5">
    <citation type="journal article" date="2012" name="FEBS J.">
        <title>Two thymidine kinases and one multisubstrate deoxyribonucleoside kinase salvage DNA precursors in Arabidopsis thaliana.</title>
        <authorList>
            <person name="Clausen A.R."/>
            <person name="Girandon L."/>
            <person name="Ali A."/>
            <person name="Knecht W."/>
            <person name="Rozpedowska E."/>
            <person name="Sandrini M.P."/>
            <person name="Andreasson E."/>
            <person name="Munch-Petersen B."/>
            <person name="Piskur J."/>
        </authorList>
    </citation>
    <scope>FUNCTION</scope>
    <scope>DISRUPTION PHENOTYPE</scope>
    <scope>CATALYTIC ACTIVITY</scope>
    <scope>BIOPHYSICOCHEMICAL PROPERTIES</scope>
    <source>
        <strain>cv. Columbia</strain>
    </source>
</reference>
<reference key="6">
    <citation type="journal article" date="2013" name="FEBS J.">
        <title>Thymidine kinase 1 regulatory fine-tuning through tetramer formation.</title>
        <authorList>
            <person name="Mutahir Z."/>
            <person name="Clausen A.R."/>
            <person name="Andersson K.-M."/>
            <person name="Wisen S.M."/>
            <person name="Munch-Petersen B."/>
            <person name="Piskur J."/>
        </authorList>
    </citation>
    <scope>SUBUNIT</scope>
    <scope>BIOPHYSICOCHEMICAL PROPERTIES</scope>
    <scope>CATALYTIC ACTIVITY</scope>
</reference>
<reference key="7">
    <citation type="journal article" date="2015" name="Plant Mol. Biol.">
        <title>Arabidopsis thaliana thymidine kinase 1a is ubiquitously expressed during development and contributes to confer tolerance to genotoxic stress.</title>
        <authorList>
            <person name="Pedroza-Garcia J.A."/>
            <person name="Najera-Martinez M."/>
            <person name="de la Paz Sanchez M."/>
            <person name="Plasencia J."/>
        </authorList>
    </citation>
    <scope>FUNCTION</scope>
    <scope>DISRUPTION PHENOTYPE</scope>
    <scope>TISSUE SPECIFICITY</scope>
    <scope>DEVELOPMENTAL STAGE</scope>
    <scope>INDUCTION BY GENOTOXINS</scope>
    <source>
        <strain>cv. Columbia</strain>
    </source>
</reference>
<dbReference type="EC" id="2.7.1.21" evidence="3 4"/>
<dbReference type="EMBL" id="AC009176">
    <property type="protein sequence ID" value="AAF13097.1"/>
    <property type="molecule type" value="Genomic_DNA"/>
</dbReference>
<dbReference type="EMBL" id="AC013483">
    <property type="protein sequence ID" value="AAF21190.1"/>
    <property type="molecule type" value="Genomic_DNA"/>
</dbReference>
<dbReference type="EMBL" id="CP002686">
    <property type="protein sequence ID" value="AEE74605.1"/>
    <property type="molecule type" value="Genomic_DNA"/>
</dbReference>
<dbReference type="EMBL" id="AF370344">
    <property type="protein sequence ID" value="AAK44159.1"/>
    <property type="molecule type" value="mRNA"/>
</dbReference>
<dbReference type="EMBL" id="AY142670">
    <property type="protein sequence ID" value="AAN13208.1"/>
    <property type="molecule type" value="mRNA"/>
</dbReference>
<dbReference type="EMBL" id="AY085873">
    <property type="protein sequence ID" value="AAM63086.1"/>
    <property type="molecule type" value="mRNA"/>
</dbReference>
<dbReference type="RefSeq" id="NP_187437.1">
    <property type="nucleotide sequence ID" value="NM_111659.4"/>
</dbReference>
<dbReference type="SMR" id="Q9S750"/>
<dbReference type="FunCoup" id="Q9S750">
    <property type="interactions" value="534"/>
</dbReference>
<dbReference type="IntAct" id="Q9S750">
    <property type="interactions" value="1"/>
</dbReference>
<dbReference type="MINT" id="Q9S750"/>
<dbReference type="STRING" id="3702.Q9S750"/>
<dbReference type="PaxDb" id="3702-AT3G07800.1"/>
<dbReference type="ProteomicsDB" id="230183"/>
<dbReference type="EnsemblPlants" id="AT3G07800.1">
    <property type="protein sequence ID" value="AT3G07800.1"/>
    <property type="gene ID" value="AT3G07800"/>
</dbReference>
<dbReference type="GeneID" id="819971"/>
<dbReference type="Gramene" id="AT3G07800.1">
    <property type="protein sequence ID" value="AT3G07800.1"/>
    <property type="gene ID" value="AT3G07800"/>
</dbReference>
<dbReference type="KEGG" id="ath:AT3G07800"/>
<dbReference type="Araport" id="AT3G07800"/>
<dbReference type="TAIR" id="AT3G07800">
    <property type="gene designation" value="TK1A"/>
</dbReference>
<dbReference type="eggNOG" id="KOG3125">
    <property type="taxonomic scope" value="Eukaryota"/>
</dbReference>
<dbReference type="HOGENOM" id="CLU_064400_1_1_1"/>
<dbReference type="InParanoid" id="Q9S750"/>
<dbReference type="OMA" id="ATHSKMT"/>
<dbReference type="PhylomeDB" id="Q9S750"/>
<dbReference type="BioCyc" id="ARA:AT3G07800-MONOMER"/>
<dbReference type="BioCyc" id="MetaCyc:AT3G07800-MONOMER"/>
<dbReference type="BRENDA" id="2.7.1.21">
    <property type="organism ID" value="399"/>
</dbReference>
<dbReference type="PRO" id="PR:Q9S750"/>
<dbReference type="Proteomes" id="UP000006548">
    <property type="component" value="Chromosome 3"/>
</dbReference>
<dbReference type="ExpressionAtlas" id="Q9S750">
    <property type="expression patterns" value="baseline and differential"/>
</dbReference>
<dbReference type="GO" id="GO:0005737">
    <property type="term" value="C:cytoplasm"/>
    <property type="evidence" value="ECO:0007669"/>
    <property type="project" value="UniProtKB-SubCell"/>
</dbReference>
<dbReference type="GO" id="GO:0005524">
    <property type="term" value="F:ATP binding"/>
    <property type="evidence" value="ECO:0007669"/>
    <property type="project" value="UniProtKB-KW"/>
</dbReference>
<dbReference type="GO" id="GO:0042802">
    <property type="term" value="F:identical protein binding"/>
    <property type="evidence" value="ECO:0000353"/>
    <property type="project" value="IntAct"/>
</dbReference>
<dbReference type="GO" id="GO:0046872">
    <property type="term" value="F:metal ion binding"/>
    <property type="evidence" value="ECO:0007669"/>
    <property type="project" value="UniProtKB-KW"/>
</dbReference>
<dbReference type="GO" id="GO:0004797">
    <property type="term" value="F:thymidine kinase activity"/>
    <property type="evidence" value="ECO:0000314"/>
    <property type="project" value="UniProtKB"/>
</dbReference>
<dbReference type="GO" id="GO:0071897">
    <property type="term" value="P:DNA biosynthetic process"/>
    <property type="evidence" value="ECO:0007669"/>
    <property type="project" value="UniProtKB-KW"/>
</dbReference>
<dbReference type="GO" id="GO:0006302">
    <property type="term" value="P:double-strand break repair"/>
    <property type="evidence" value="ECO:0000315"/>
    <property type="project" value="UniProtKB"/>
</dbReference>
<dbReference type="GO" id="GO:0010225">
    <property type="term" value="P:response to UV-C"/>
    <property type="evidence" value="ECO:0000315"/>
    <property type="project" value="UniProtKB"/>
</dbReference>
<dbReference type="FunFam" id="3.30.60.20:FF:000051">
    <property type="entry name" value="Thymidine kinase"/>
    <property type="match status" value="1"/>
</dbReference>
<dbReference type="FunFam" id="3.40.50.300:FF:000948">
    <property type="entry name" value="Thymidine kinase"/>
    <property type="match status" value="1"/>
</dbReference>
<dbReference type="Gene3D" id="3.30.60.20">
    <property type="match status" value="1"/>
</dbReference>
<dbReference type="Gene3D" id="3.40.50.300">
    <property type="entry name" value="P-loop containing nucleotide triphosphate hydrolases"/>
    <property type="match status" value="1"/>
</dbReference>
<dbReference type="InterPro" id="IPR027417">
    <property type="entry name" value="P-loop_NTPase"/>
</dbReference>
<dbReference type="InterPro" id="IPR001267">
    <property type="entry name" value="Thymidine_kinase"/>
</dbReference>
<dbReference type="InterPro" id="IPR020633">
    <property type="entry name" value="Thymidine_kinase_CS"/>
</dbReference>
<dbReference type="PANTHER" id="PTHR11441">
    <property type="entry name" value="THYMIDINE KINASE"/>
    <property type="match status" value="1"/>
</dbReference>
<dbReference type="PANTHER" id="PTHR11441:SF12">
    <property type="entry name" value="THYMIDINE KINASE A"/>
    <property type="match status" value="1"/>
</dbReference>
<dbReference type="Pfam" id="PF00265">
    <property type="entry name" value="TK"/>
    <property type="match status" value="1"/>
</dbReference>
<dbReference type="SUPFAM" id="SSF57716">
    <property type="entry name" value="Glucocorticoid receptor-like (DNA-binding domain)"/>
    <property type="match status" value="1"/>
</dbReference>
<dbReference type="SUPFAM" id="SSF52540">
    <property type="entry name" value="P-loop containing nucleoside triphosphate hydrolases"/>
    <property type="match status" value="1"/>
</dbReference>
<dbReference type="PROSITE" id="PS00603">
    <property type="entry name" value="TK_CELLULAR_TYPE"/>
    <property type="match status" value="1"/>
</dbReference>
<sequence length="238" mass="26079">MATLKASFLIKTLDSDVTGDFLSDLERRGSGAVHVIMGPMFSGKSTSLLRRIKSEISDGRSVAMLKSSKDTRYAKDSVVTHDGIGFPCWALPDLMSFPEKFGLDAYNKLDVIGIDEAQFFGDLYEFCCKVADDDGKIVIVAGLDGDYLRRSFGAVLDIIPIADSVTKLTARCEVCGHKAFFTLRKNCDTRTELIGGADVYMPVCRKHYITNHIVIKASKKVLEDSDKARAESCVAATI</sequence>